<evidence type="ECO:0000255" key="1">
    <source>
        <dbReference type="HAMAP-Rule" id="MF_01454"/>
    </source>
</evidence>
<evidence type="ECO:0000255" key="2">
    <source>
        <dbReference type="PROSITE-ProRule" id="PRU01231"/>
    </source>
</evidence>
<evidence type="ECO:0000256" key="3">
    <source>
        <dbReference type="SAM" id="MobiDB-lite"/>
    </source>
</evidence>
<comment type="function">
    <text evidence="1">An essential GTPase which binds GTP, GDP and possibly (p)ppGpp with moderate affinity, with high nucleotide exchange rates and a fairly low GTP hydrolysis rate. Plays a role in control of the cell cycle, stress response, ribosome biogenesis and in those bacteria that undergo differentiation, in morphogenesis control.</text>
</comment>
<comment type="cofactor">
    <cofactor evidence="1">
        <name>Mg(2+)</name>
        <dbReference type="ChEBI" id="CHEBI:18420"/>
    </cofactor>
</comment>
<comment type="subunit">
    <text evidence="1">Monomer.</text>
</comment>
<comment type="subcellular location">
    <subcellularLocation>
        <location evidence="1">Cytoplasm</location>
    </subcellularLocation>
</comment>
<comment type="similarity">
    <text evidence="1">Belongs to the TRAFAC class OBG-HflX-like GTPase superfamily. OBG GTPase family.</text>
</comment>
<organism>
    <name type="scientific">Salmonella heidelberg (strain SL476)</name>
    <dbReference type="NCBI Taxonomy" id="454169"/>
    <lineage>
        <taxon>Bacteria</taxon>
        <taxon>Pseudomonadati</taxon>
        <taxon>Pseudomonadota</taxon>
        <taxon>Gammaproteobacteria</taxon>
        <taxon>Enterobacterales</taxon>
        <taxon>Enterobacteriaceae</taxon>
        <taxon>Salmonella</taxon>
    </lineage>
</organism>
<keyword id="KW-0963">Cytoplasm</keyword>
<keyword id="KW-0342">GTP-binding</keyword>
<keyword id="KW-0378">Hydrolase</keyword>
<keyword id="KW-0460">Magnesium</keyword>
<keyword id="KW-0479">Metal-binding</keyword>
<keyword id="KW-0547">Nucleotide-binding</keyword>
<proteinExistence type="inferred from homology"/>
<feature type="chain" id="PRO_0000386225" description="GTPase Obg">
    <location>
        <begin position="1"/>
        <end position="390"/>
    </location>
</feature>
<feature type="domain" description="Obg" evidence="2">
    <location>
        <begin position="1"/>
        <end position="159"/>
    </location>
</feature>
<feature type="domain" description="OBG-type G" evidence="1">
    <location>
        <begin position="160"/>
        <end position="333"/>
    </location>
</feature>
<feature type="region of interest" description="Disordered" evidence="3">
    <location>
        <begin position="127"/>
        <end position="147"/>
    </location>
</feature>
<feature type="compositionally biased region" description="Polar residues" evidence="3">
    <location>
        <begin position="129"/>
        <end position="145"/>
    </location>
</feature>
<feature type="binding site" evidence="1">
    <location>
        <begin position="166"/>
        <end position="173"/>
    </location>
    <ligand>
        <name>GTP</name>
        <dbReference type="ChEBI" id="CHEBI:37565"/>
    </ligand>
</feature>
<feature type="binding site" evidence="1">
    <location>
        <position position="173"/>
    </location>
    <ligand>
        <name>Mg(2+)</name>
        <dbReference type="ChEBI" id="CHEBI:18420"/>
    </ligand>
</feature>
<feature type="binding site" evidence="1">
    <location>
        <begin position="191"/>
        <end position="195"/>
    </location>
    <ligand>
        <name>GTP</name>
        <dbReference type="ChEBI" id="CHEBI:37565"/>
    </ligand>
</feature>
<feature type="binding site" evidence="1">
    <location>
        <position position="193"/>
    </location>
    <ligand>
        <name>Mg(2+)</name>
        <dbReference type="ChEBI" id="CHEBI:18420"/>
    </ligand>
</feature>
<feature type="binding site" evidence="1">
    <location>
        <begin position="213"/>
        <end position="216"/>
    </location>
    <ligand>
        <name>GTP</name>
        <dbReference type="ChEBI" id="CHEBI:37565"/>
    </ligand>
</feature>
<feature type="binding site" evidence="1">
    <location>
        <begin position="283"/>
        <end position="286"/>
    </location>
    <ligand>
        <name>GTP</name>
        <dbReference type="ChEBI" id="CHEBI:37565"/>
    </ligand>
</feature>
<feature type="binding site" evidence="1">
    <location>
        <begin position="314"/>
        <end position="316"/>
    </location>
    <ligand>
        <name>GTP</name>
        <dbReference type="ChEBI" id="CHEBI:37565"/>
    </ligand>
</feature>
<protein>
    <recommendedName>
        <fullName evidence="1">GTPase Obg</fullName>
        <ecNumber evidence="1">3.6.5.-</ecNumber>
    </recommendedName>
    <alternativeName>
        <fullName evidence="1">GTP-binding protein Obg</fullName>
    </alternativeName>
</protein>
<name>OBG_SALHS</name>
<sequence length="390" mass="43104">MKFVDEASILVVAGDGGNGCVSFRREKYIPKGGPDGGDGGDGGDVWMEADENLNTLIDYRFEKSFRAERGQNGASRDCTGKRGKDVTIKVPVGTRVIDQGTGETMGDMTKHGQRLLVAKGGWHGLGNTRFKSSVNRTPRQKTNGTPGDKRDLLLELMLLADVGMLGMPNAGKSTFIRAVSAAKPKVADYPFTTLVPSLGVVRMDSEKSFVVADIPGLIEGAAEGAGLGIRFLKHLERCRVLLHLIDIDPIDGSDPVENARIIIGELEKYSQDLAAKPRWLVFNKIDLMDKTEAEEKAKAIAEALGWEGKYYLISAASQLGVKDLCWDVMTFIIENPIAQAEEAKQPEKVEFMWDDYHRQQLAEVEEDADDDWDDDWDEDDEEGVEFIYKR</sequence>
<gene>
    <name evidence="1" type="primary">obg</name>
    <name type="ordered locus">SeHA_C3598</name>
</gene>
<dbReference type="EC" id="3.6.5.-" evidence="1"/>
<dbReference type="EMBL" id="CP001120">
    <property type="protein sequence ID" value="ACF66556.1"/>
    <property type="molecule type" value="Genomic_DNA"/>
</dbReference>
<dbReference type="SMR" id="B4TJ21"/>
<dbReference type="KEGG" id="seh:SeHA_C3598"/>
<dbReference type="HOGENOM" id="CLU_011747_2_0_6"/>
<dbReference type="Proteomes" id="UP000001866">
    <property type="component" value="Chromosome"/>
</dbReference>
<dbReference type="GO" id="GO:0005737">
    <property type="term" value="C:cytoplasm"/>
    <property type="evidence" value="ECO:0007669"/>
    <property type="project" value="UniProtKB-SubCell"/>
</dbReference>
<dbReference type="GO" id="GO:0005525">
    <property type="term" value="F:GTP binding"/>
    <property type="evidence" value="ECO:0007669"/>
    <property type="project" value="UniProtKB-UniRule"/>
</dbReference>
<dbReference type="GO" id="GO:0003924">
    <property type="term" value="F:GTPase activity"/>
    <property type="evidence" value="ECO:0007669"/>
    <property type="project" value="UniProtKB-UniRule"/>
</dbReference>
<dbReference type="GO" id="GO:0000287">
    <property type="term" value="F:magnesium ion binding"/>
    <property type="evidence" value="ECO:0007669"/>
    <property type="project" value="InterPro"/>
</dbReference>
<dbReference type="GO" id="GO:0042254">
    <property type="term" value="P:ribosome biogenesis"/>
    <property type="evidence" value="ECO:0007669"/>
    <property type="project" value="UniProtKB-UniRule"/>
</dbReference>
<dbReference type="CDD" id="cd01898">
    <property type="entry name" value="Obg"/>
    <property type="match status" value="1"/>
</dbReference>
<dbReference type="FunFam" id="2.70.210.12:FF:000001">
    <property type="entry name" value="GTPase Obg"/>
    <property type="match status" value="1"/>
</dbReference>
<dbReference type="FunFam" id="3.40.50.300:FF:000185">
    <property type="entry name" value="GTPase Obg"/>
    <property type="match status" value="1"/>
</dbReference>
<dbReference type="Gene3D" id="2.70.210.12">
    <property type="entry name" value="GTP1/OBG domain"/>
    <property type="match status" value="1"/>
</dbReference>
<dbReference type="Gene3D" id="3.40.50.300">
    <property type="entry name" value="P-loop containing nucleotide triphosphate hydrolases"/>
    <property type="match status" value="1"/>
</dbReference>
<dbReference type="HAMAP" id="MF_01454">
    <property type="entry name" value="GTPase_Obg"/>
    <property type="match status" value="1"/>
</dbReference>
<dbReference type="InterPro" id="IPR031167">
    <property type="entry name" value="G_OBG"/>
</dbReference>
<dbReference type="InterPro" id="IPR006073">
    <property type="entry name" value="GTP-bd"/>
</dbReference>
<dbReference type="InterPro" id="IPR014100">
    <property type="entry name" value="GTP-bd_Obg/CgtA"/>
</dbReference>
<dbReference type="InterPro" id="IPR006074">
    <property type="entry name" value="GTP1-OBG_CS"/>
</dbReference>
<dbReference type="InterPro" id="IPR006169">
    <property type="entry name" value="GTP1_OBG_dom"/>
</dbReference>
<dbReference type="InterPro" id="IPR036726">
    <property type="entry name" value="GTP1_OBG_dom_sf"/>
</dbReference>
<dbReference type="InterPro" id="IPR045086">
    <property type="entry name" value="OBG_GTPase"/>
</dbReference>
<dbReference type="InterPro" id="IPR027417">
    <property type="entry name" value="P-loop_NTPase"/>
</dbReference>
<dbReference type="NCBIfam" id="TIGR02729">
    <property type="entry name" value="Obg_CgtA"/>
    <property type="match status" value="1"/>
</dbReference>
<dbReference type="NCBIfam" id="NF008955">
    <property type="entry name" value="PRK12297.1"/>
    <property type="match status" value="1"/>
</dbReference>
<dbReference type="NCBIfam" id="NF008956">
    <property type="entry name" value="PRK12299.1"/>
    <property type="match status" value="1"/>
</dbReference>
<dbReference type="PANTHER" id="PTHR11702">
    <property type="entry name" value="DEVELOPMENTALLY REGULATED GTP-BINDING PROTEIN-RELATED"/>
    <property type="match status" value="1"/>
</dbReference>
<dbReference type="PANTHER" id="PTHR11702:SF31">
    <property type="entry name" value="MITOCHONDRIAL RIBOSOME-ASSOCIATED GTPASE 2"/>
    <property type="match status" value="1"/>
</dbReference>
<dbReference type="Pfam" id="PF01018">
    <property type="entry name" value="GTP1_OBG"/>
    <property type="match status" value="1"/>
</dbReference>
<dbReference type="Pfam" id="PF01926">
    <property type="entry name" value="MMR_HSR1"/>
    <property type="match status" value="1"/>
</dbReference>
<dbReference type="PIRSF" id="PIRSF002401">
    <property type="entry name" value="GTP_bd_Obg/CgtA"/>
    <property type="match status" value="1"/>
</dbReference>
<dbReference type="PRINTS" id="PR00326">
    <property type="entry name" value="GTP1OBG"/>
</dbReference>
<dbReference type="SUPFAM" id="SSF82051">
    <property type="entry name" value="Obg GTP-binding protein N-terminal domain"/>
    <property type="match status" value="1"/>
</dbReference>
<dbReference type="SUPFAM" id="SSF52540">
    <property type="entry name" value="P-loop containing nucleoside triphosphate hydrolases"/>
    <property type="match status" value="1"/>
</dbReference>
<dbReference type="PROSITE" id="PS51710">
    <property type="entry name" value="G_OBG"/>
    <property type="match status" value="1"/>
</dbReference>
<dbReference type="PROSITE" id="PS00905">
    <property type="entry name" value="GTP1_OBG"/>
    <property type="match status" value="1"/>
</dbReference>
<dbReference type="PROSITE" id="PS51883">
    <property type="entry name" value="OBG"/>
    <property type="match status" value="1"/>
</dbReference>
<accession>B4TJ21</accession>
<reference key="1">
    <citation type="journal article" date="2011" name="J. Bacteriol.">
        <title>Comparative genomics of 28 Salmonella enterica isolates: evidence for CRISPR-mediated adaptive sublineage evolution.</title>
        <authorList>
            <person name="Fricke W.F."/>
            <person name="Mammel M.K."/>
            <person name="McDermott P.F."/>
            <person name="Tartera C."/>
            <person name="White D.G."/>
            <person name="Leclerc J.E."/>
            <person name="Ravel J."/>
            <person name="Cebula T.A."/>
        </authorList>
    </citation>
    <scope>NUCLEOTIDE SEQUENCE [LARGE SCALE GENOMIC DNA]</scope>
    <source>
        <strain>SL476</strain>
    </source>
</reference>